<dbReference type="EC" id="5.4.99.12" evidence="1"/>
<dbReference type="EMBL" id="CP000777">
    <property type="protein sequence ID" value="ABZ93068.1"/>
    <property type="molecule type" value="Genomic_DNA"/>
</dbReference>
<dbReference type="RefSeq" id="WP_012387574.1">
    <property type="nucleotide sequence ID" value="NC_010842.1"/>
</dbReference>
<dbReference type="SMR" id="B0SC03"/>
<dbReference type="KEGG" id="lbf:LBF_0530"/>
<dbReference type="HOGENOM" id="CLU_014673_0_1_12"/>
<dbReference type="GO" id="GO:0003723">
    <property type="term" value="F:RNA binding"/>
    <property type="evidence" value="ECO:0007669"/>
    <property type="project" value="InterPro"/>
</dbReference>
<dbReference type="GO" id="GO:0160147">
    <property type="term" value="F:tRNA pseudouridine(38-40) synthase activity"/>
    <property type="evidence" value="ECO:0007669"/>
    <property type="project" value="UniProtKB-EC"/>
</dbReference>
<dbReference type="GO" id="GO:0031119">
    <property type="term" value="P:tRNA pseudouridine synthesis"/>
    <property type="evidence" value="ECO:0007669"/>
    <property type="project" value="UniProtKB-UniRule"/>
</dbReference>
<dbReference type="CDD" id="cd02570">
    <property type="entry name" value="PseudoU_synth_EcTruA"/>
    <property type="match status" value="1"/>
</dbReference>
<dbReference type="FunFam" id="3.30.70.580:FF:000001">
    <property type="entry name" value="tRNA pseudouridine synthase A"/>
    <property type="match status" value="1"/>
</dbReference>
<dbReference type="Gene3D" id="3.30.70.660">
    <property type="entry name" value="Pseudouridine synthase I, catalytic domain, C-terminal subdomain"/>
    <property type="match status" value="1"/>
</dbReference>
<dbReference type="Gene3D" id="3.30.70.580">
    <property type="entry name" value="Pseudouridine synthase I, catalytic domain, N-terminal subdomain"/>
    <property type="match status" value="1"/>
</dbReference>
<dbReference type="HAMAP" id="MF_00171">
    <property type="entry name" value="TruA"/>
    <property type="match status" value="1"/>
</dbReference>
<dbReference type="InterPro" id="IPR020103">
    <property type="entry name" value="PsdUridine_synth_cat_dom_sf"/>
</dbReference>
<dbReference type="InterPro" id="IPR001406">
    <property type="entry name" value="PsdUridine_synth_TruA"/>
</dbReference>
<dbReference type="InterPro" id="IPR020097">
    <property type="entry name" value="PsdUridine_synth_TruA_a/b_dom"/>
</dbReference>
<dbReference type="InterPro" id="IPR020095">
    <property type="entry name" value="PsdUridine_synth_TruA_C"/>
</dbReference>
<dbReference type="InterPro" id="IPR020094">
    <property type="entry name" value="TruA/RsuA/RluB/E/F_N"/>
</dbReference>
<dbReference type="NCBIfam" id="TIGR00071">
    <property type="entry name" value="hisT_truA"/>
    <property type="match status" value="1"/>
</dbReference>
<dbReference type="PANTHER" id="PTHR11142">
    <property type="entry name" value="PSEUDOURIDYLATE SYNTHASE"/>
    <property type="match status" value="1"/>
</dbReference>
<dbReference type="PANTHER" id="PTHR11142:SF0">
    <property type="entry name" value="TRNA PSEUDOURIDINE SYNTHASE-LIKE 1"/>
    <property type="match status" value="1"/>
</dbReference>
<dbReference type="Pfam" id="PF01416">
    <property type="entry name" value="PseudoU_synth_1"/>
    <property type="match status" value="2"/>
</dbReference>
<dbReference type="PIRSF" id="PIRSF001430">
    <property type="entry name" value="tRNA_psdUrid_synth"/>
    <property type="match status" value="1"/>
</dbReference>
<dbReference type="SUPFAM" id="SSF55120">
    <property type="entry name" value="Pseudouridine synthase"/>
    <property type="match status" value="1"/>
</dbReference>
<name>TRUA_LEPBA</name>
<protein>
    <recommendedName>
        <fullName evidence="1">tRNA pseudouridine synthase A</fullName>
        <ecNumber evidence="1">5.4.99.12</ecNumber>
    </recommendedName>
    <alternativeName>
        <fullName evidence="1">tRNA pseudouridine(38-40) synthase</fullName>
    </alternativeName>
    <alternativeName>
        <fullName evidence="1">tRNA pseudouridylate synthase I</fullName>
    </alternativeName>
    <alternativeName>
        <fullName evidence="1">tRNA-uridine isomerase I</fullName>
    </alternativeName>
</protein>
<gene>
    <name evidence="1" type="primary">truA</name>
    <name type="ordered locus">LBF_0530</name>
</gene>
<reference key="1">
    <citation type="journal article" date="2008" name="PLoS ONE">
        <title>Genome sequence of the saprophyte Leptospira biflexa provides insights into the evolution of Leptospira and the pathogenesis of leptospirosis.</title>
        <authorList>
            <person name="Picardeau M."/>
            <person name="Bulach D.M."/>
            <person name="Bouchier C."/>
            <person name="Zuerner R.L."/>
            <person name="Zidane N."/>
            <person name="Wilson P.J."/>
            <person name="Creno S."/>
            <person name="Kuczek E.S."/>
            <person name="Bommezzadri S."/>
            <person name="Davis J.C."/>
            <person name="McGrath A."/>
            <person name="Johnson M.J."/>
            <person name="Boursaux-Eude C."/>
            <person name="Seemann T."/>
            <person name="Rouy Z."/>
            <person name="Coppel R.L."/>
            <person name="Rood J.I."/>
            <person name="Lajus A."/>
            <person name="Davies J.K."/>
            <person name="Medigue C."/>
            <person name="Adler B."/>
        </authorList>
    </citation>
    <scope>NUCLEOTIDE SEQUENCE [LARGE SCALE GENOMIC DNA]</scope>
    <source>
        <strain>Patoc 1 / Ames</strain>
    </source>
</reference>
<comment type="function">
    <text evidence="1">Formation of pseudouridine at positions 38, 39 and 40 in the anticodon stem and loop of transfer RNAs.</text>
</comment>
<comment type="catalytic activity">
    <reaction evidence="1">
        <text>uridine(38/39/40) in tRNA = pseudouridine(38/39/40) in tRNA</text>
        <dbReference type="Rhea" id="RHEA:22376"/>
        <dbReference type="Rhea" id="RHEA-COMP:10085"/>
        <dbReference type="Rhea" id="RHEA-COMP:10087"/>
        <dbReference type="ChEBI" id="CHEBI:65314"/>
        <dbReference type="ChEBI" id="CHEBI:65315"/>
        <dbReference type="EC" id="5.4.99.12"/>
    </reaction>
</comment>
<comment type="subunit">
    <text evidence="1">Homodimer.</text>
</comment>
<comment type="similarity">
    <text evidence="1">Belongs to the tRNA pseudouridine synthase TruA family.</text>
</comment>
<keyword id="KW-0413">Isomerase</keyword>
<keyword id="KW-0819">tRNA processing</keyword>
<proteinExistence type="inferred from homology"/>
<evidence type="ECO:0000255" key="1">
    <source>
        <dbReference type="HAMAP-Rule" id="MF_00171"/>
    </source>
</evidence>
<organism>
    <name type="scientific">Leptospira biflexa serovar Patoc (strain Patoc 1 / Ames)</name>
    <dbReference type="NCBI Taxonomy" id="355278"/>
    <lineage>
        <taxon>Bacteria</taxon>
        <taxon>Pseudomonadati</taxon>
        <taxon>Spirochaetota</taxon>
        <taxon>Spirochaetia</taxon>
        <taxon>Leptospirales</taxon>
        <taxon>Leptospiraceae</taxon>
        <taxon>Leptospira</taxon>
    </lineage>
</organism>
<accession>B0SC03</accession>
<feature type="chain" id="PRO_1000097755" description="tRNA pseudouridine synthase A">
    <location>
        <begin position="1"/>
        <end position="264"/>
    </location>
</feature>
<feature type="active site" description="Nucleophile" evidence="1">
    <location>
        <position position="54"/>
    </location>
</feature>
<feature type="binding site" evidence="1">
    <location>
        <position position="113"/>
    </location>
    <ligand>
        <name>substrate</name>
    </ligand>
</feature>
<sequence length="264" mass="30213">MPNYALLVEYDGTHFNGWQKQKNLPTVQSSIESALGIILRRNPASRLSVAGRTDTGVHALGMVCNFKTEHPIPNFHKLLVSLNALTPTGVSVKNVVEVPSDFHARFSCTGREYIYKLYYSKYESSFVEGRAFWVKGHIDWERVKKQLQVLVGEKDFRSFTKAKSMAGKRAVREILAIQLENLSPEWYQIRIRANGFMHNMVRITVGTLLDIGKGRWESRSIDSILEEKNRTQAGVTLPPDGLYFVRAYYEDHPEIHELYKIPLP</sequence>